<dbReference type="EC" id="2.5.1.7" evidence="1"/>
<dbReference type="EMBL" id="CP000447">
    <property type="protein sequence ID" value="ABI73200.1"/>
    <property type="molecule type" value="Genomic_DNA"/>
</dbReference>
<dbReference type="RefSeq" id="WP_011638801.1">
    <property type="nucleotide sequence ID" value="NC_008345.1"/>
</dbReference>
<dbReference type="SMR" id="Q07XR4"/>
<dbReference type="STRING" id="318167.Sfri_3364"/>
<dbReference type="KEGG" id="sfr:Sfri_3364"/>
<dbReference type="eggNOG" id="COG0766">
    <property type="taxonomic scope" value="Bacteria"/>
</dbReference>
<dbReference type="HOGENOM" id="CLU_027387_0_0_6"/>
<dbReference type="OrthoDB" id="9803760at2"/>
<dbReference type="UniPathway" id="UPA00219"/>
<dbReference type="Proteomes" id="UP000000684">
    <property type="component" value="Chromosome"/>
</dbReference>
<dbReference type="GO" id="GO:0005737">
    <property type="term" value="C:cytoplasm"/>
    <property type="evidence" value="ECO:0007669"/>
    <property type="project" value="UniProtKB-SubCell"/>
</dbReference>
<dbReference type="GO" id="GO:0008760">
    <property type="term" value="F:UDP-N-acetylglucosamine 1-carboxyvinyltransferase activity"/>
    <property type="evidence" value="ECO:0007669"/>
    <property type="project" value="UniProtKB-UniRule"/>
</dbReference>
<dbReference type="GO" id="GO:0051301">
    <property type="term" value="P:cell division"/>
    <property type="evidence" value="ECO:0007669"/>
    <property type="project" value="UniProtKB-KW"/>
</dbReference>
<dbReference type="GO" id="GO:0071555">
    <property type="term" value="P:cell wall organization"/>
    <property type="evidence" value="ECO:0007669"/>
    <property type="project" value="UniProtKB-KW"/>
</dbReference>
<dbReference type="GO" id="GO:0009252">
    <property type="term" value="P:peptidoglycan biosynthetic process"/>
    <property type="evidence" value="ECO:0007669"/>
    <property type="project" value="UniProtKB-UniRule"/>
</dbReference>
<dbReference type="GO" id="GO:0008360">
    <property type="term" value="P:regulation of cell shape"/>
    <property type="evidence" value="ECO:0007669"/>
    <property type="project" value="UniProtKB-KW"/>
</dbReference>
<dbReference type="GO" id="GO:0019277">
    <property type="term" value="P:UDP-N-acetylgalactosamine biosynthetic process"/>
    <property type="evidence" value="ECO:0007669"/>
    <property type="project" value="InterPro"/>
</dbReference>
<dbReference type="CDD" id="cd01555">
    <property type="entry name" value="UdpNAET"/>
    <property type="match status" value="1"/>
</dbReference>
<dbReference type="FunFam" id="3.65.10.10:FF:000002">
    <property type="entry name" value="UDP-N-acetylglucosamine 1-carboxyvinyltransferase"/>
    <property type="match status" value="1"/>
</dbReference>
<dbReference type="Gene3D" id="3.65.10.10">
    <property type="entry name" value="Enolpyruvate transferase domain"/>
    <property type="match status" value="2"/>
</dbReference>
<dbReference type="HAMAP" id="MF_00111">
    <property type="entry name" value="MurA"/>
    <property type="match status" value="1"/>
</dbReference>
<dbReference type="InterPro" id="IPR001986">
    <property type="entry name" value="Enolpyruvate_Tfrase_dom"/>
</dbReference>
<dbReference type="InterPro" id="IPR036968">
    <property type="entry name" value="Enolpyruvate_Tfrase_sf"/>
</dbReference>
<dbReference type="InterPro" id="IPR050068">
    <property type="entry name" value="MurA_subfamily"/>
</dbReference>
<dbReference type="InterPro" id="IPR013792">
    <property type="entry name" value="RNA3'P_cycl/enolpyr_Trfase_a/b"/>
</dbReference>
<dbReference type="InterPro" id="IPR005750">
    <property type="entry name" value="UDP_GlcNAc_COvinyl_MurA"/>
</dbReference>
<dbReference type="NCBIfam" id="TIGR01072">
    <property type="entry name" value="murA"/>
    <property type="match status" value="1"/>
</dbReference>
<dbReference type="NCBIfam" id="NF006873">
    <property type="entry name" value="PRK09369.1"/>
    <property type="match status" value="1"/>
</dbReference>
<dbReference type="PANTHER" id="PTHR43783">
    <property type="entry name" value="UDP-N-ACETYLGLUCOSAMINE 1-CARBOXYVINYLTRANSFERASE"/>
    <property type="match status" value="1"/>
</dbReference>
<dbReference type="PANTHER" id="PTHR43783:SF1">
    <property type="entry name" value="UDP-N-ACETYLGLUCOSAMINE 1-CARBOXYVINYLTRANSFERASE"/>
    <property type="match status" value="1"/>
</dbReference>
<dbReference type="Pfam" id="PF00275">
    <property type="entry name" value="EPSP_synthase"/>
    <property type="match status" value="1"/>
</dbReference>
<dbReference type="SUPFAM" id="SSF55205">
    <property type="entry name" value="EPT/RTPC-like"/>
    <property type="match status" value="1"/>
</dbReference>
<gene>
    <name evidence="1" type="primary">murA</name>
    <name type="ordered locus">Sfri_3364</name>
</gene>
<accession>Q07XR4</accession>
<evidence type="ECO:0000255" key="1">
    <source>
        <dbReference type="HAMAP-Rule" id="MF_00111"/>
    </source>
</evidence>
<keyword id="KW-0131">Cell cycle</keyword>
<keyword id="KW-0132">Cell division</keyword>
<keyword id="KW-0133">Cell shape</keyword>
<keyword id="KW-0961">Cell wall biogenesis/degradation</keyword>
<keyword id="KW-0963">Cytoplasm</keyword>
<keyword id="KW-0573">Peptidoglycan synthesis</keyword>
<keyword id="KW-0670">Pyruvate</keyword>
<keyword id="KW-1185">Reference proteome</keyword>
<keyword id="KW-0808">Transferase</keyword>
<feature type="chain" id="PRO_1000023101" description="UDP-N-acetylglucosamine 1-carboxyvinyltransferase">
    <location>
        <begin position="1"/>
        <end position="419"/>
    </location>
</feature>
<feature type="active site" description="Proton donor" evidence="1">
    <location>
        <position position="117"/>
    </location>
</feature>
<feature type="binding site" evidence="1">
    <location>
        <begin position="22"/>
        <end position="23"/>
    </location>
    <ligand>
        <name>phosphoenolpyruvate</name>
        <dbReference type="ChEBI" id="CHEBI:58702"/>
    </ligand>
</feature>
<feature type="binding site" evidence="1">
    <location>
        <position position="93"/>
    </location>
    <ligand>
        <name>UDP-N-acetyl-alpha-D-glucosamine</name>
        <dbReference type="ChEBI" id="CHEBI:57705"/>
    </ligand>
</feature>
<feature type="binding site" evidence="1">
    <location>
        <position position="307"/>
    </location>
    <ligand>
        <name>UDP-N-acetyl-alpha-D-glucosamine</name>
        <dbReference type="ChEBI" id="CHEBI:57705"/>
    </ligand>
</feature>
<feature type="binding site" evidence="1">
    <location>
        <position position="329"/>
    </location>
    <ligand>
        <name>UDP-N-acetyl-alpha-D-glucosamine</name>
        <dbReference type="ChEBI" id="CHEBI:57705"/>
    </ligand>
</feature>
<feature type="modified residue" description="2-(S-cysteinyl)pyruvic acid O-phosphothioketal" evidence="1">
    <location>
        <position position="117"/>
    </location>
</feature>
<name>MURA_SHEFN</name>
<proteinExistence type="inferred from homology"/>
<comment type="function">
    <text evidence="1">Cell wall formation. Adds enolpyruvyl to UDP-N-acetylglucosamine.</text>
</comment>
<comment type="catalytic activity">
    <reaction evidence="1">
        <text>phosphoenolpyruvate + UDP-N-acetyl-alpha-D-glucosamine = UDP-N-acetyl-3-O-(1-carboxyvinyl)-alpha-D-glucosamine + phosphate</text>
        <dbReference type="Rhea" id="RHEA:18681"/>
        <dbReference type="ChEBI" id="CHEBI:43474"/>
        <dbReference type="ChEBI" id="CHEBI:57705"/>
        <dbReference type="ChEBI" id="CHEBI:58702"/>
        <dbReference type="ChEBI" id="CHEBI:68483"/>
        <dbReference type="EC" id="2.5.1.7"/>
    </reaction>
</comment>
<comment type="pathway">
    <text evidence="1">Cell wall biogenesis; peptidoglycan biosynthesis.</text>
</comment>
<comment type="subcellular location">
    <subcellularLocation>
        <location evidence="1">Cytoplasm</location>
    </subcellularLocation>
</comment>
<comment type="similarity">
    <text evidence="1">Belongs to the EPSP synthase family. MurA subfamily.</text>
</comment>
<organism>
    <name type="scientific">Shewanella frigidimarina (strain NCIMB 400)</name>
    <dbReference type="NCBI Taxonomy" id="318167"/>
    <lineage>
        <taxon>Bacteria</taxon>
        <taxon>Pseudomonadati</taxon>
        <taxon>Pseudomonadota</taxon>
        <taxon>Gammaproteobacteria</taxon>
        <taxon>Alteromonadales</taxon>
        <taxon>Shewanellaceae</taxon>
        <taxon>Shewanella</taxon>
    </lineage>
</organism>
<sequence length="419" mass="44732">MDKLTIKASNPLAGEVVISGAKNAALPILMAGVLAETDFIVSNVPSLRDVITSCELLRCLGAEVEDLGGSRIRISTTNLNEYCAPYDLVKTMRASILILGPLLARYGTADVSLPGGCAIGARPVNLHLHGLELMGAKIEVKEGYIKARVDGRLKGTHIFMDMVSVGATENLLMAAALADGTTVIENAAREPEVTDLAHCLIAMGAKITGIGTATLKIEGVERLSGCEYRVMPDRIETGSFLVAAAVTRGKIRCVSADPSALEAVLSKLEDAGAEITTGEDWIELDMKGQRPKSVNIKTAPYPAFPTDMQAQFCVLNALAEGTGRVTETIFENRFMHVPELIRMGADIEQEGNTCIIHGIDRLNGAQVMATDLRASASLVIAGLMAEGTTTVDRIYHLDRGYEHIEAKFQGLGAEVVRVK</sequence>
<reference key="1">
    <citation type="submission" date="2006-08" db="EMBL/GenBank/DDBJ databases">
        <title>Complete sequence of Shewanella frigidimarina NCIMB 400.</title>
        <authorList>
            <consortium name="US DOE Joint Genome Institute"/>
            <person name="Copeland A."/>
            <person name="Lucas S."/>
            <person name="Lapidus A."/>
            <person name="Barry K."/>
            <person name="Detter J.C."/>
            <person name="Glavina del Rio T."/>
            <person name="Hammon N."/>
            <person name="Israni S."/>
            <person name="Dalin E."/>
            <person name="Tice H."/>
            <person name="Pitluck S."/>
            <person name="Fredrickson J.K."/>
            <person name="Kolker E."/>
            <person name="McCuel L.A."/>
            <person name="DiChristina T."/>
            <person name="Nealson K.H."/>
            <person name="Newman D."/>
            <person name="Tiedje J.M."/>
            <person name="Zhou J."/>
            <person name="Romine M.F."/>
            <person name="Culley D.E."/>
            <person name="Serres M."/>
            <person name="Chertkov O."/>
            <person name="Brettin T."/>
            <person name="Bruce D."/>
            <person name="Han C."/>
            <person name="Tapia R."/>
            <person name="Gilna P."/>
            <person name="Schmutz J."/>
            <person name="Larimer F."/>
            <person name="Land M."/>
            <person name="Hauser L."/>
            <person name="Kyrpides N."/>
            <person name="Mikhailova N."/>
            <person name="Richardson P."/>
        </authorList>
    </citation>
    <scope>NUCLEOTIDE SEQUENCE [LARGE SCALE GENOMIC DNA]</scope>
    <source>
        <strain>NCIMB 400</strain>
    </source>
</reference>
<protein>
    <recommendedName>
        <fullName evidence="1">UDP-N-acetylglucosamine 1-carboxyvinyltransferase</fullName>
        <ecNumber evidence="1">2.5.1.7</ecNumber>
    </recommendedName>
    <alternativeName>
        <fullName evidence="1">Enoylpyruvate transferase</fullName>
    </alternativeName>
    <alternativeName>
        <fullName evidence="1">UDP-N-acetylglucosamine enolpyruvyl transferase</fullName>
        <shortName evidence="1">EPT</shortName>
    </alternativeName>
</protein>